<proteinExistence type="evidence at protein level"/>
<feature type="chain" id="PRO_0000051474" description="Elongator complex protein 2">
    <location>
        <begin position="1"/>
        <end position="788"/>
    </location>
</feature>
<feature type="repeat" description="WD 1" evidence="1">
    <location>
        <begin position="13"/>
        <end position="51"/>
    </location>
</feature>
<feature type="repeat" description="WD 2" evidence="1">
    <location>
        <begin position="57"/>
        <end position="96"/>
    </location>
</feature>
<feature type="repeat" description="WD 3" evidence="1">
    <location>
        <begin position="102"/>
        <end position="139"/>
    </location>
</feature>
<feature type="repeat" description="WD 4" evidence="1">
    <location>
        <begin position="200"/>
        <end position="243"/>
    </location>
</feature>
<feature type="repeat" description="WD 5" evidence="1">
    <location>
        <begin position="279"/>
        <end position="318"/>
    </location>
</feature>
<feature type="repeat" description="WD 6" evidence="1">
    <location>
        <begin position="336"/>
        <end position="377"/>
    </location>
</feature>
<feature type="repeat" description="WD 7" evidence="1">
    <location>
        <begin position="383"/>
        <end position="422"/>
    </location>
</feature>
<feature type="repeat" description="WD 8" evidence="1">
    <location>
        <begin position="437"/>
        <end position="475"/>
    </location>
</feature>
<feature type="repeat" description="WD 9" evidence="1">
    <location>
        <begin position="556"/>
        <end position="600"/>
    </location>
</feature>
<feature type="repeat" description="WD 10" evidence="1">
    <location>
        <begin position="604"/>
        <end position="643"/>
    </location>
</feature>
<feature type="repeat" description="WD 11" evidence="1">
    <location>
        <begin position="651"/>
        <end position="692"/>
    </location>
</feature>
<feature type="repeat" description="WD 12" evidence="1">
    <location>
        <begin position="699"/>
        <end position="742"/>
    </location>
</feature>
<feature type="repeat" description="WD 13" evidence="1">
    <location>
        <begin position="750"/>
        <end position="788"/>
    </location>
</feature>
<feature type="region of interest" description="Disordered" evidence="2">
    <location>
        <begin position="490"/>
        <end position="530"/>
    </location>
</feature>
<feature type="compositionally biased region" description="Acidic residues" evidence="2">
    <location>
        <begin position="507"/>
        <end position="517"/>
    </location>
</feature>
<feature type="modified residue" description="Phosphoserine" evidence="14">
    <location>
        <position position="492"/>
    </location>
</feature>
<feature type="mutagenesis site" description="Abolishes interaction with ELP1/IKI3 and ELP3." evidence="15">
    <location>
        <begin position="1"/>
        <end position="14"/>
    </location>
</feature>
<feature type="mutagenesis site" description="Dramatically reduced interaction with microtubules but no effect on interaction with ELP1/IKI3 or ELP3; when associated with A-628, A-654 and A-675." evidence="15">
    <original>R</original>
    <variation>A</variation>
    <location>
        <position position="626"/>
    </location>
</feature>
<feature type="mutagenesis site" description="Dramatically reduced interaction with microtubules but no effect on interaction with ELP1/IKI3 or ELP3; when associated with A-626, A-654 and A-675." evidence="15">
    <original>R</original>
    <variation>A</variation>
    <location>
        <position position="628"/>
    </location>
</feature>
<feature type="mutagenesis site" description="Dramatically reduced interaction with microtubules but no effect on interaction with ELP1/IKI3 or ELP3; when associated with A-626, A-628 and A-675." evidence="15">
    <original>R</original>
    <variation>A</variation>
    <location>
        <position position="654"/>
    </location>
</feature>
<feature type="mutagenesis site" description="Dramatically reduced interaction with microtubules but no effect on interaction with ELP1/IKI3 or ELP3; when associated with A-626, A-628 and A-654." evidence="15">
    <location>
        <position position="675"/>
    </location>
</feature>
<feature type="sequence conflict" description="In Ref. 4; AAS56426." evidence="21" ref="4">
    <original>S</original>
    <variation>P</variation>
    <location>
        <position position="579"/>
    </location>
</feature>
<feature type="strand" evidence="30">
    <location>
        <begin position="4"/>
        <end position="11"/>
    </location>
</feature>
<feature type="strand" evidence="30">
    <location>
        <begin position="20"/>
        <end position="23"/>
    </location>
</feature>
<feature type="turn" evidence="30">
    <location>
        <begin position="25"/>
        <end position="27"/>
    </location>
</feature>
<feature type="strand" evidence="30">
    <location>
        <begin position="30"/>
        <end position="34"/>
    </location>
</feature>
<feature type="strand" evidence="30">
    <location>
        <begin position="37"/>
        <end position="41"/>
    </location>
</feature>
<feature type="strand" evidence="31">
    <location>
        <begin position="45"/>
        <end position="47"/>
    </location>
</feature>
<feature type="strand" evidence="30">
    <location>
        <begin position="51"/>
        <end position="55"/>
    </location>
</feature>
<feature type="strand" evidence="30">
    <location>
        <begin position="62"/>
        <end position="67"/>
    </location>
</feature>
<feature type="strand" evidence="30">
    <location>
        <begin position="69"/>
        <end position="78"/>
    </location>
</feature>
<feature type="strand" evidence="30">
    <location>
        <begin position="83"/>
        <end position="92"/>
    </location>
</feature>
<feature type="strand" evidence="30">
    <location>
        <begin position="94"/>
        <end position="100"/>
    </location>
</feature>
<feature type="strand" evidence="31">
    <location>
        <begin position="103"/>
        <end position="105"/>
    </location>
</feature>
<feature type="strand" evidence="30">
    <location>
        <begin position="107"/>
        <end position="113"/>
    </location>
</feature>
<feature type="strand" evidence="30">
    <location>
        <begin position="116"/>
        <end position="121"/>
    </location>
</feature>
<feature type="strand" evidence="30">
    <location>
        <begin position="124"/>
        <end position="131"/>
    </location>
</feature>
<feature type="strand" evidence="30">
    <location>
        <begin position="133"/>
        <end position="136"/>
    </location>
</feature>
<feature type="strand" evidence="30">
    <location>
        <begin position="138"/>
        <end position="145"/>
    </location>
</feature>
<feature type="strand" evidence="30">
    <location>
        <begin position="148"/>
        <end position="150"/>
    </location>
</feature>
<feature type="strand" evidence="30">
    <location>
        <begin position="153"/>
        <end position="162"/>
    </location>
</feature>
<feature type="strand" evidence="30">
    <location>
        <begin position="165"/>
        <end position="185"/>
    </location>
</feature>
<feature type="strand" evidence="30">
    <location>
        <begin position="188"/>
        <end position="198"/>
    </location>
</feature>
<feature type="strand" evidence="30">
    <location>
        <begin position="205"/>
        <end position="210"/>
    </location>
</feature>
<feature type="strand" evidence="29">
    <location>
        <begin position="214"/>
        <end position="217"/>
    </location>
</feature>
<feature type="strand" evidence="30">
    <location>
        <begin position="218"/>
        <end position="225"/>
    </location>
</feature>
<feature type="strand" evidence="30">
    <location>
        <begin position="228"/>
        <end position="239"/>
    </location>
</feature>
<feature type="strand" evidence="31">
    <location>
        <begin position="246"/>
        <end position="248"/>
    </location>
</feature>
<feature type="helix" evidence="31">
    <location>
        <begin position="254"/>
        <end position="256"/>
    </location>
</feature>
<feature type="strand" evidence="30">
    <location>
        <begin position="259"/>
        <end position="264"/>
    </location>
</feature>
<feature type="strand" evidence="30">
    <location>
        <begin position="267"/>
        <end position="278"/>
    </location>
</feature>
<feature type="strand" evidence="30">
    <location>
        <begin position="280"/>
        <end position="289"/>
    </location>
</feature>
<feature type="strand" evidence="30">
    <location>
        <begin position="291"/>
        <end position="294"/>
    </location>
</feature>
<feature type="strand" evidence="30">
    <location>
        <begin position="296"/>
        <end position="300"/>
    </location>
</feature>
<feature type="strand" evidence="30">
    <location>
        <begin position="303"/>
        <end position="310"/>
    </location>
</feature>
<feature type="turn" evidence="30">
    <location>
        <begin position="312"/>
        <end position="314"/>
    </location>
</feature>
<feature type="strand" evidence="30">
    <location>
        <begin position="317"/>
        <end position="324"/>
    </location>
</feature>
<feature type="strand" evidence="30">
    <location>
        <begin position="344"/>
        <end position="349"/>
    </location>
</feature>
<feature type="strand" evidence="30">
    <location>
        <begin position="352"/>
        <end position="358"/>
    </location>
</feature>
<feature type="strand" evidence="30">
    <location>
        <begin position="364"/>
        <end position="373"/>
    </location>
</feature>
<feature type="strand" evidence="30">
    <location>
        <begin position="376"/>
        <end position="381"/>
    </location>
</feature>
<feature type="strand" evidence="29">
    <location>
        <begin position="384"/>
        <end position="386"/>
    </location>
</feature>
<feature type="strand" evidence="30">
    <location>
        <begin position="388"/>
        <end position="393"/>
    </location>
</feature>
<feature type="strand" evidence="30">
    <location>
        <begin position="398"/>
        <end position="404"/>
    </location>
</feature>
<feature type="turn" evidence="30">
    <location>
        <begin position="405"/>
        <end position="407"/>
    </location>
</feature>
<feature type="strand" evidence="30">
    <location>
        <begin position="408"/>
        <end position="414"/>
    </location>
</feature>
<feature type="strand" evidence="31">
    <location>
        <begin position="419"/>
        <end position="421"/>
    </location>
</feature>
<feature type="strand" evidence="30">
    <location>
        <begin position="429"/>
        <end position="438"/>
    </location>
</feature>
<feature type="strand" evidence="30">
    <location>
        <begin position="442"/>
        <end position="457"/>
    </location>
</feature>
<feature type="strand" evidence="30">
    <location>
        <begin position="460"/>
        <end position="466"/>
    </location>
</feature>
<feature type="helix" evidence="30">
    <location>
        <begin position="469"/>
        <end position="479"/>
    </location>
</feature>
<feature type="strand" evidence="31">
    <location>
        <begin position="487"/>
        <end position="489"/>
    </location>
</feature>
<feature type="strand" evidence="31">
    <location>
        <begin position="498"/>
        <end position="501"/>
    </location>
</feature>
<feature type="helix" evidence="30">
    <location>
        <begin position="539"/>
        <end position="544"/>
    </location>
</feature>
<feature type="strand" evidence="30">
    <location>
        <begin position="550"/>
        <end position="555"/>
    </location>
</feature>
<feature type="strand" evidence="30">
    <location>
        <begin position="561"/>
        <end position="566"/>
    </location>
</feature>
<feature type="strand" evidence="30">
    <location>
        <begin position="572"/>
        <end position="577"/>
    </location>
</feature>
<feature type="strand" evidence="30">
    <location>
        <begin position="581"/>
        <end position="583"/>
    </location>
</feature>
<feature type="strand" evidence="30">
    <location>
        <begin position="586"/>
        <end position="591"/>
    </location>
</feature>
<feature type="turn" evidence="30">
    <location>
        <begin position="592"/>
        <end position="594"/>
    </location>
</feature>
<feature type="strand" evidence="30">
    <location>
        <begin position="597"/>
        <end position="603"/>
    </location>
</feature>
<feature type="strand" evidence="30">
    <location>
        <begin position="609"/>
        <end position="614"/>
    </location>
</feature>
<feature type="strand" evidence="30">
    <location>
        <begin position="618"/>
        <end position="625"/>
    </location>
</feature>
<feature type="strand" evidence="29">
    <location>
        <begin position="626"/>
        <end position="628"/>
    </location>
</feature>
<feature type="strand" evidence="30">
    <location>
        <begin position="630"/>
        <end position="636"/>
    </location>
</feature>
<feature type="turn" evidence="30">
    <location>
        <begin position="637"/>
        <end position="640"/>
    </location>
</feature>
<feature type="strand" evidence="30">
    <location>
        <begin position="641"/>
        <end position="651"/>
    </location>
</feature>
<feature type="strand" evidence="30">
    <location>
        <begin position="656"/>
        <end position="661"/>
    </location>
</feature>
<feature type="helix" evidence="30">
    <location>
        <begin position="664"/>
        <end position="666"/>
    </location>
</feature>
<feature type="strand" evidence="30">
    <location>
        <begin position="668"/>
        <end position="674"/>
    </location>
</feature>
<feature type="strand" evidence="30">
    <location>
        <begin position="677"/>
        <end position="685"/>
    </location>
</feature>
<feature type="strand" evidence="30">
    <location>
        <begin position="687"/>
        <end position="699"/>
    </location>
</feature>
<feature type="strand" evidence="30">
    <location>
        <begin position="704"/>
        <end position="709"/>
    </location>
</feature>
<feature type="strand" evidence="31">
    <location>
        <begin position="714"/>
        <end position="716"/>
    </location>
</feature>
<feature type="strand" evidence="30">
    <location>
        <begin position="717"/>
        <end position="724"/>
    </location>
</feature>
<feature type="strand" evidence="30">
    <location>
        <begin position="729"/>
        <end position="735"/>
    </location>
</feature>
<feature type="strand" evidence="30">
    <location>
        <begin position="738"/>
        <end position="744"/>
    </location>
</feature>
<feature type="turn" evidence="30">
    <location>
        <begin position="747"/>
        <end position="749"/>
    </location>
</feature>
<feature type="strand" evidence="30">
    <location>
        <begin position="755"/>
        <end position="760"/>
    </location>
</feature>
<feature type="strand" evidence="30">
    <location>
        <begin position="768"/>
        <end position="775"/>
    </location>
</feature>
<feature type="strand" evidence="30">
    <location>
        <begin position="780"/>
        <end position="786"/>
    </location>
</feature>
<organism>
    <name type="scientific">Saccharomyces cerevisiae (strain ATCC 204508 / S288c)</name>
    <name type="common">Baker's yeast</name>
    <dbReference type="NCBI Taxonomy" id="559292"/>
    <lineage>
        <taxon>Eukaryota</taxon>
        <taxon>Fungi</taxon>
        <taxon>Dikarya</taxon>
        <taxon>Ascomycota</taxon>
        <taxon>Saccharomycotina</taxon>
        <taxon>Saccharomycetes</taxon>
        <taxon>Saccharomycetales</taxon>
        <taxon>Saccharomycetaceae</taxon>
        <taxon>Saccharomyces</taxon>
    </lineage>
</organism>
<dbReference type="EMBL" id="Z49133">
    <property type="protein sequence ID" value="CAA88993.1"/>
    <property type="molecule type" value="Genomic_DNA"/>
</dbReference>
<dbReference type="EMBL" id="Z72985">
    <property type="protein sequence ID" value="CAA97227.1"/>
    <property type="molecule type" value="Genomic_DNA"/>
</dbReference>
<dbReference type="EMBL" id="AY558100">
    <property type="protein sequence ID" value="AAS56426.1"/>
    <property type="molecule type" value="Genomic_DNA"/>
</dbReference>
<dbReference type="EMBL" id="BK006941">
    <property type="protein sequence ID" value="DAA08293.1"/>
    <property type="molecule type" value="Genomic_DNA"/>
</dbReference>
<dbReference type="PIR" id="S53923">
    <property type="entry name" value="S53923"/>
</dbReference>
<dbReference type="RefSeq" id="NP_011716.3">
    <property type="nucleotide sequence ID" value="NM_001181329.3"/>
</dbReference>
<dbReference type="PDB" id="4XFV">
    <property type="method" value="X-ray"/>
    <property type="resolution" value="3.20 A"/>
    <property type="chains" value="A=1-788"/>
</dbReference>
<dbReference type="PDB" id="5M2N">
    <property type="method" value="X-ray"/>
    <property type="resolution" value="2.81 A"/>
    <property type="chains" value="A=1-788"/>
</dbReference>
<dbReference type="PDB" id="6QK7">
    <property type="method" value="EM"/>
    <property type="resolution" value="3.30 A"/>
    <property type="chains" value="B=1-788"/>
</dbReference>
<dbReference type="PDB" id="8ASV">
    <property type="method" value="EM"/>
    <property type="resolution" value="4.35 A"/>
    <property type="chains" value="B=1-788"/>
</dbReference>
<dbReference type="PDB" id="8ASW">
    <property type="method" value="EM"/>
    <property type="resolution" value="3.96 A"/>
    <property type="chains" value="B=1-788"/>
</dbReference>
<dbReference type="PDBsum" id="4XFV"/>
<dbReference type="PDBsum" id="5M2N"/>
<dbReference type="PDBsum" id="6QK7"/>
<dbReference type="PDBsum" id="8ASV"/>
<dbReference type="PDBsum" id="8ASW"/>
<dbReference type="EMDB" id="EMD-15622"/>
<dbReference type="EMDB" id="EMD-15623"/>
<dbReference type="EMDB" id="EMD-4571"/>
<dbReference type="SMR" id="P42935"/>
<dbReference type="BioGRID" id="33453">
    <property type="interactions" value="594"/>
</dbReference>
<dbReference type="ComplexPortal" id="CPX-779">
    <property type="entry name" value="Elongator holoenzyme complex"/>
</dbReference>
<dbReference type="DIP" id="DIP-2386N"/>
<dbReference type="FunCoup" id="P42935">
    <property type="interactions" value="1307"/>
</dbReference>
<dbReference type="IntAct" id="P42935">
    <property type="interactions" value="76"/>
</dbReference>
<dbReference type="MINT" id="P42935"/>
<dbReference type="STRING" id="4932.YGR200C"/>
<dbReference type="iPTMnet" id="P42935"/>
<dbReference type="PaxDb" id="4932-YGR200C"/>
<dbReference type="PeptideAtlas" id="P42935"/>
<dbReference type="DNASU" id="853114"/>
<dbReference type="EnsemblFungi" id="YGR200C_mRNA">
    <property type="protein sequence ID" value="YGR200C"/>
    <property type="gene ID" value="YGR200C"/>
</dbReference>
<dbReference type="GeneID" id="853114"/>
<dbReference type="KEGG" id="sce:YGR200C"/>
<dbReference type="AGR" id="SGD:S000003432"/>
<dbReference type="SGD" id="S000003432">
    <property type="gene designation" value="ELP2"/>
</dbReference>
<dbReference type="VEuPathDB" id="FungiDB:YGR200C"/>
<dbReference type="eggNOG" id="KOG1063">
    <property type="taxonomic scope" value="Eukaryota"/>
</dbReference>
<dbReference type="GeneTree" id="ENSGT00390000000916"/>
<dbReference type="HOGENOM" id="CLU_006430_0_0_1"/>
<dbReference type="InParanoid" id="P42935"/>
<dbReference type="OMA" id="ENFRHIS"/>
<dbReference type="OrthoDB" id="27911at2759"/>
<dbReference type="BioCyc" id="MetaCyc:G3O-30885-MONOMER"/>
<dbReference type="BioCyc" id="YEAST:G3O-30885-MONOMER"/>
<dbReference type="UniPathway" id="UPA00988"/>
<dbReference type="BioGRID-ORCS" id="853114">
    <property type="hits" value="3 hits in 10 CRISPR screens"/>
</dbReference>
<dbReference type="EvolutionaryTrace" id="P42935"/>
<dbReference type="PRO" id="PR:P42935"/>
<dbReference type="Proteomes" id="UP000002311">
    <property type="component" value="Chromosome VII"/>
</dbReference>
<dbReference type="RNAct" id="P42935">
    <property type="molecule type" value="protein"/>
</dbReference>
<dbReference type="GO" id="GO:0005737">
    <property type="term" value="C:cytoplasm"/>
    <property type="evidence" value="ECO:0000314"/>
    <property type="project" value="SGD"/>
</dbReference>
<dbReference type="GO" id="GO:0033588">
    <property type="term" value="C:elongator holoenzyme complex"/>
    <property type="evidence" value="ECO:0000314"/>
    <property type="project" value="UniProtKB"/>
</dbReference>
<dbReference type="GO" id="GO:0005654">
    <property type="term" value="C:nucleoplasm"/>
    <property type="evidence" value="ECO:0000304"/>
    <property type="project" value="Reactome"/>
</dbReference>
<dbReference type="GO" id="GO:0005634">
    <property type="term" value="C:nucleus"/>
    <property type="evidence" value="ECO:0000314"/>
    <property type="project" value="SGD"/>
</dbReference>
<dbReference type="GO" id="GO:0008017">
    <property type="term" value="F:microtubule binding"/>
    <property type="evidence" value="ECO:0000314"/>
    <property type="project" value="SGD"/>
</dbReference>
<dbReference type="GO" id="GO:0015031">
    <property type="term" value="P:protein transport"/>
    <property type="evidence" value="ECO:0007669"/>
    <property type="project" value="UniProtKB-KW"/>
</dbReference>
<dbReference type="GO" id="GO:0032447">
    <property type="term" value="P:protein urmylation"/>
    <property type="evidence" value="ECO:0000315"/>
    <property type="project" value="SGD"/>
</dbReference>
<dbReference type="GO" id="GO:0006357">
    <property type="term" value="P:regulation of transcription by RNA polymerase II"/>
    <property type="evidence" value="ECO:0000315"/>
    <property type="project" value="SGD"/>
</dbReference>
<dbReference type="GO" id="GO:0006417">
    <property type="term" value="P:regulation of translation"/>
    <property type="evidence" value="ECO:0000303"/>
    <property type="project" value="ComplexPortal"/>
</dbReference>
<dbReference type="GO" id="GO:0002098">
    <property type="term" value="P:tRNA wobble uridine modification"/>
    <property type="evidence" value="ECO:0000315"/>
    <property type="project" value="SGD"/>
</dbReference>
<dbReference type="CDD" id="cd00200">
    <property type="entry name" value="WD40"/>
    <property type="match status" value="1"/>
</dbReference>
<dbReference type="FunFam" id="2.130.10.10:FF:001142">
    <property type="entry name" value="Elongator complex protein 2"/>
    <property type="match status" value="1"/>
</dbReference>
<dbReference type="FunFam" id="2.130.10.10:FF:001393">
    <property type="entry name" value="Elongator complex protein 2"/>
    <property type="match status" value="1"/>
</dbReference>
<dbReference type="FunFam" id="2.130.10.10:FF:001077">
    <property type="entry name" value="Elongator protein 2"/>
    <property type="match status" value="1"/>
</dbReference>
<dbReference type="FunFam" id="2.130.10.10:FF:000835">
    <property type="entry name" value="RNA polymerase II Elongator subunit"/>
    <property type="match status" value="1"/>
</dbReference>
<dbReference type="Gene3D" id="2.130.10.10">
    <property type="entry name" value="YVTN repeat-like/Quinoprotein amine dehydrogenase"/>
    <property type="match status" value="4"/>
</dbReference>
<dbReference type="InterPro" id="IPR037289">
    <property type="entry name" value="Elp2"/>
</dbReference>
<dbReference type="InterPro" id="IPR015943">
    <property type="entry name" value="WD40/YVTN_repeat-like_dom_sf"/>
</dbReference>
<dbReference type="InterPro" id="IPR036322">
    <property type="entry name" value="WD40_repeat_dom_sf"/>
</dbReference>
<dbReference type="InterPro" id="IPR001680">
    <property type="entry name" value="WD40_rpt"/>
</dbReference>
<dbReference type="PANTHER" id="PTHR44111">
    <property type="entry name" value="ELONGATOR COMPLEX PROTEIN 2"/>
    <property type="match status" value="1"/>
</dbReference>
<dbReference type="PANTHER" id="PTHR44111:SF1">
    <property type="entry name" value="ELONGATOR COMPLEX PROTEIN 2"/>
    <property type="match status" value="1"/>
</dbReference>
<dbReference type="Pfam" id="PF00400">
    <property type="entry name" value="WD40"/>
    <property type="match status" value="8"/>
</dbReference>
<dbReference type="SMART" id="SM00320">
    <property type="entry name" value="WD40"/>
    <property type="match status" value="11"/>
</dbReference>
<dbReference type="SUPFAM" id="SSF50978">
    <property type="entry name" value="WD40 repeat-like"/>
    <property type="match status" value="2"/>
</dbReference>
<dbReference type="PROSITE" id="PS50082">
    <property type="entry name" value="WD_REPEATS_2"/>
    <property type="match status" value="6"/>
</dbReference>
<dbReference type="PROSITE" id="PS50294">
    <property type="entry name" value="WD_REPEATS_REGION"/>
    <property type="match status" value="3"/>
</dbReference>
<comment type="function">
    <text evidence="3 7 9 10 11 12 15 19 20">Component of the elongator complex, a multiprotein complex which is required for multiple tRNA modifications, including mcm5U (5-methoxycarbonylmethyl uridine), mcm5s2U (5-methoxycarbonylmethyl-2-thiouridine), and ncm5U (5-carbamoylmethyl uridine) (PubMed:15769872, PubMed:18755837, PubMed:31309145). The elongator complex catalyzes formation of carboxymethyluridine in the wobble base at position 34 in tRNAs (PubMed:29332244). It functions as a gamma-toxin target (TOT); disruption of the complex confers resistance to Kluyveromyces lactis toxin zymocin (pGKL1 killer toxin) (PubMed:11296232). May also be involved in sensitivity to Pichia inositovora toxin (PubMed:13680368). ELP2 binds to microtubules (PubMed:25960406). Independently, ELP2 may be involved in polarized exocytosis (PubMed:15138274, PubMed:15780940).</text>
</comment>
<comment type="pathway">
    <text evidence="10 12">tRNA modification; 5-methoxycarbonylmethyl-2-thiouridine-tRNA biosynthesis.</text>
</comment>
<comment type="subunit">
    <text evidence="4 5 6 13 15 16 17 18 19">Component of the elongator complex which consists of ELP1/IKI3, ELP2, ELP3, ELP4, ELP5/IKI1 and ELP6 (PubMed:11435442, PubMed:11689709, PubMed:27872205, PubMed:27974378). The elongator complex is composed of two copies of the Elp123 subcomplex (composed of ELP1/IKI3, ELP2 and ELP3) and two copies of the Elp456 subcomplex (composed of ELP4, ELP5/IKI1 and ELP6) (PubMed:25960406, PubMed:27872205, PubMed:27974378). The Elp123 subcomplex forms a two-lobed scaffold, which binds the Elp456 subcomplex asymmetrically (PubMed:27872205, PubMed:27974378). In the complex, ELP2 interacts with ELP1/IKI3 (PubMed:12139626). In each lobe, ELP2 is tightly sandwiched between ELP1/IKI3 and ELP3 (PubMed:31309145). The Elp123 subcomplex binds tRNA through ELP1/IKI3 and ELP3 and can bind 2 tRNAs simultaneously (PubMed:31309145). tRNA-binding induces conformational rearrangements which precisely position the targeted anticodon base in the active site (PubMed:31309145). The Elp456 subcomplex binds tRNA and has ATPase activity (PubMed:22343726). Interacts with KTI11/DPH3 (PubMed:18627462, PubMed:27694803).</text>
</comment>
<comment type="interaction">
    <interactant intactId="EBI-23459">
        <id>P42935</id>
    </interactant>
    <interactant intactId="EBI-33957">
        <id>Q02908</id>
        <label>ELP3</label>
    </interactant>
    <organismsDiffer>false</organismsDiffer>
    <experiments>8</experiments>
</comment>
<comment type="interaction">
    <interactant intactId="EBI-23459">
        <id>P42935</id>
    </interactant>
    <interactant intactId="EBI-35277">
        <id>Q02884</id>
        <label>ELP4</label>
    </interactant>
    <organismsDiffer>false</organismsDiffer>
    <experiments>7</experiments>
</comment>
<comment type="interaction">
    <interactant intactId="EBI-23459">
        <id>P42935</id>
    </interactant>
    <interactant intactId="EBI-27653">
        <id>Q04868</id>
        <label>ELP6</label>
    </interactant>
    <organismsDiffer>false</organismsDiffer>
    <experiments>3</experiments>
</comment>
<comment type="interaction">
    <interactant intactId="EBI-23459">
        <id>P42935</id>
    </interactant>
    <interactant intactId="EBI-9061">
        <id>P38874</id>
        <label>IKI1</label>
    </interactant>
    <organismsDiffer>false</organismsDiffer>
    <experiments>6</experiments>
</comment>
<comment type="interaction">
    <interactant intactId="EBI-23459">
        <id>P42935</id>
    </interactant>
    <interactant intactId="EBI-9068">
        <id>Q06706</id>
        <label>IKI3</label>
    </interactant>
    <organismsDiffer>false</organismsDiffer>
    <experiments>12</experiments>
</comment>
<comment type="interaction">
    <interactant intactId="EBI-23459">
        <id>P42935</id>
    </interactant>
    <interactant intactId="EBI-2055307">
        <id>Q3E840</id>
        <label>KTI11</label>
    </interactant>
    <organismsDiffer>false</organismsDiffer>
    <experiments>3</experiments>
</comment>
<comment type="subcellular location">
    <subcellularLocation>
        <location>Cytoplasm</location>
    </subcellularLocation>
    <subcellularLocation>
        <location>Nucleus</location>
    </subcellularLocation>
</comment>
<comment type="domain">
    <text evidence="15">Folds into a two seven-bladed beta-propeller structure which is required for elongator complex assembly and association with microtubules.</text>
</comment>
<comment type="miscellaneous">
    <text evidence="8">Present with 6090 molecules/cell in log phase SD medium.</text>
</comment>
<comment type="similarity">
    <text evidence="21">Belongs to the WD repeat ELP2 family.</text>
</comment>
<comment type="caution">
    <text evidence="22 23 24 25 26">The elongator complex was originally thought to play a role in transcription elongation. However, it is no longer thought to play a direct role in this process and its primary function is thought to be in tRNA modification.</text>
</comment>
<name>ELP2_YEAST</name>
<sequence>MVECITPEAIFIGANKQTQVSDIHKVKKIVAFGAGKTIALWDPIEPNNKGVYATLKGHEAEVTCVRFVPDSDFMVSASEDHHVKIWKFTDYSHLQCIQTIQHYSKTIVALSALPSLISVGCADGTISIWRQNIQNDEFGLAHEFTIKKGFFYPLCLSLSKVEEKKYLLAIGGTNVNVFIASFILSDSGIEKCRVVAELEGHEDWVKSLAFRHQETPGDYLLCSGSQDRYIRLWRIRINDLIDDSEEDSKKLTLLSNKQYKFQIDDELRVGINFEALIMGHDDWISSLQWHESRLQLLAATADTSLMVWEPDETSGIWVCSLRLGEMSSKGASTATGSSGGFWSCLWFTHERMDFFLTNGKTGSWRMWATKDNIICDQRLGISGATKDVTDIAWSPSGEYLLATSLDQTTRLFAPWIYDASGRKREIATWHEFSRPQIHGYDMICVETVTDTRFVSGGDEKILRSFDLPKGVAGMLQKFVGIQFEEKSEMPDSATVPVLGLSNKAGEDDANEDDEEEEGGNKETPDITDPLSLLECPPMEDQLQRHLLWPEVEKLYGHGFEITCLDISPDQKLIASACRSNNVQNAVIRIFSTENWLEIKPALPFHSLTITRLKFSKDGKFLLSVCRDRKWALWERNMEDNTFELRFKNEKPHTRIIWDADWAPLEFGNVFVTASRDKTVKVWRHQKEPADDYVLEASIKHTKAVTAISIHDSMIREKILISVGLENGEIYLYSYTLGKFELITQLNEDITPADKITRLRWSHLKRNGKLFLGVGSSDLSTRIYSLAYE</sequence>
<evidence type="ECO:0000255" key="1"/>
<evidence type="ECO:0000256" key="2">
    <source>
        <dbReference type="SAM" id="MobiDB-lite"/>
    </source>
</evidence>
<evidence type="ECO:0000269" key="3">
    <source>
    </source>
</evidence>
<evidence type="ECO:0000269" key="4">
    <source>
    </source>
</evidence>
<evidence type="ECO:0000269" key="5">
    <source>
    </source>
</evidence>
<evidence type="ECO:0000269" key="6">
    <source>
    </source>
</evidence>
<evidence type="ECO:0000269" key="7">
    <source>
    </source>
</evidence>
<evidence type="ECO:0000269" key="8">
    <source>
    </source>
</evidence>
<evidence type="ECO:0000269" key="9">
    <source>
    </source>
</evidence>
<evidence type="ECO:0000269" key="10">
    <source>
    </source>
</evidence>
<evidence type="ECO:0000269" key="11">
    <source>
    </source>
</evidence>
<evidence type="ECO:0000269" key="12">
    <source>
    </source>
</evidence>
<evidence type="ECO:0000269" key="13">
    <source>
    </source>
</evidence>
<evidence type="ECO:0000269" key="14">
    <source>
    </source>
</evidence>
<evidence type="ECO:0000269" key="15">
    <source>
    </source>
</evidence>
<evidence type="ECO:0000269" key="16">
    <source>
    </source>
</evidence>
<evidence type="ECO:0000269" key="17">
    <source>
    </source>
</evidence>
<evidence type="ECO:0000269" key="18">
    <source>
    </source>
</evidence>
<evidence type="ECO:0000269" key="19">
    <source>
    </source>
</evidence>
<evidence type="ECO:0000303" key="20">
    <source>
    </source>
</evidence>
<evidence type="ECO:0000305" key="21"/>
<evidence type="ECO:0000305" key="22">
    <source>
    </source>
</evidence>
<evidence type="ECO:0000305" key="23">
    <source>
    </source>
</evidence>
<evidence type="ECO:0000305" key="24">
    <source>
    </source>
</evidence>
<evidence type="ECO:0000305" key="25">
    <source>
    </source>
</evidence>
<evidence type="ECO:0000305" key="26">
    <source>
    </source>
</evidence>
<evidence type="ECO:0007744" key="27">
    <source>
        <dbReference type="PDB" id="4XFV"/>
    </source>
</evidence>
<evidence type="ECO:0007744" key="28">
    <source>
        <dbReference type="PDB" id="6QK7"/>
    </source>
</evidence>
<evidence type="ECO:0007829" key="29">
    <source>
        <dbReference type="PDB" id="4XFV"/>
    </source>
</evidence>
<evidence type="ECO:0007829" key="30">
    <source>
        <dbReference type="PDB" id="5M2N"/>
    </source>
</evidence>
<evidence type="ECO:0007829" key="31">
    <source>
        <dbReference type="PDB" id="6QK7"/>
    </source>
</evidence>
<gene>
    <name type="primary">ELP2</name>
    <name type="synonym">TOT2</name>
    <name type="ordered locus">YGR200C</name>
    <name type="ORF">G7725</name>
</gene>
<keyword id="KW-0002">3D-structure</keyword>
<keyword id="KW-0963">Cytoplasm</keyword>
<keyword id="KW-0539">Nucleus</keyword>
<keyword id="KW-0597">Phosphoprotein</keyword>
<keyword id="KW-0653">Protein transport</keyword>
<keyword id="KW-1185">Reference proteome</keyword>
<keyword id="KW-0677">Repeat</keyword>
<keyword id="KW-0813">Transport</keyword>
<keyword id="KW-0819">tRNA processing</keyword>
<keyword id="KW-0853">WD repeat</keyword>
<protein>
    <recommendedName>
        <fullName>Elongator complex protein 2</fullName>
    </recommendedName>
    <alternativeName>
        <fullName>Gamma-toxin target 2</fullName>
    </alternativeName>
</protein>
<accession>P42935</accession>
<accession>D6VUY2</accession>
<accession>E9P8V1</accession>
<reference key="1">
    <citation type="journal article" date="1996" name="Yeast">
        <title>Sequencing of a 17.6 kb segment on the right arm of yeast chromosome VII reveals 12 ORFs, including CCT, ADE3 and TR-I genes, homologues of the yeast PMT and EF1G genes, of the human and bacterial electron-transferring flavoproteins (beta-chain) and of the Escherichia coli phosphoserine phosphohydrolase, and five new ORFs.</title>
        <authorList>
            <person name="Guerreiro P."/>
            <person name="Barreiros T."/>
            <person name="Soares H."/>
            <person name="Cyrne L."/>
            <person name="Maia e Silva A."/>
            <person name="Rodrigues-Pousada C."/>
        </authorList>
    </citation>
    <scope>NUCLEOTIDE SEQUENCE [GENOMIC DNA]</scope>
    <source>
        <strain>ATCC 204508 / S288c</strain>
    </source>
</reference>
<reference key="2">
    <citation type="journal article" date="1997" name="Nature">
        <title>The nucleotide sequence of Saccharomyces cerevisiae chromosome VII.</title>
        <authorList>
            <person name="Tettelin H."/>
            <person name="Agostoni-Carbone M.L."/>
            <person name="Albermann K."/>
            <person name="Albers M."/>
            <person name="Arroyo J."/>
            <person name="Backes U."/>
            <person name="Barreiros T."/>
            <person name="Bertani I."/>
            <person name="Bjourson A.J."/>
            <person name="Brueckner M."/>
            <person name="Bruschi C.V."/>
            <person name="Carignani G."/>
            <person name="Castagnoli L."/>
            <person name="Cerdan E."/>
            <person name="Clemente M.L."/>
            <person name="Coblenz A."/>
            <person name="Coglievina M."/>
            <person name="Coissac E."/>
            <person name="Defoor E."/>
            <person name="Del Bino S."/>
            <person name="Delius H."/>
            <person name="Delneri D."/>
            <person name="de Wergifosse P."/>
            <person name="Dujon B."/>
            <person name="Durand P."/>
            <person name="Entian K.-D."/>
            <person name="Eraso P."/>
            <person name="Escribano V."/>
            <person name="Fabiani L."/>
            <person name="Fartmann B."/>
            <person name="Feroli F."/>
            <person name="Feuermann M."/>
            <person name="Frontali L."/>
            <person name="Garcia-Gonzalez M."/>
            <person name="Garcia-Saez M.I."/>
            <person name="Goffeau A."/>
            <person name="Guerreiro P."/>
            <person name="Hani J."/>
            <person name="Hansen M."/>
            <person name="Hebling U."/>
            <person name="Hernandez K."/>
            <person name="Heumann K."/>
            <person name="Hilger F."/>
            <person name="Hofmann B."/>
            <person name="Indge K.J."/>
            <person name="James C.M."/>
            <person name="Klima R."/>
            <person name="Koetter P."/>
            <person name="Kramer B."/>
            <person name="Kramer W."/>
            <person name="Lauquin G."/>
            <person name="Leuther H."/>
            <person name="Louis E.J."/>
            <person name="Maillier E."/>
            <person name="Marconi A."/>
            <person name="Martegani E."/>
            <person name="Mazon M.J."/>
            <person name="Mazzoni C."/>
            <person name="McReynolds A.D.K."/>
            <person name="Melchioretto P."/>
            <person name="Mewes H.-W."/>
            <person name="Minenkova O."/>
            <person name="Mueller-Auer S."/>
            <person name="Nawrocki A."/>
            <person name="Netter P."/>
            <person name="Neu R."/>
            <person name="Nombela C."/>
            <person name="Oliver S.G."/>
            <person name="Panzeri L."/>
            <person name="Paoluzi S."/>
            <person name="Plevani P."/>
            <person name="Portetelle D."/>
            <person name="Portillo F."/>
            <person name="Potier S."/>
            <person name="Purnelle B."/>
            <person name="Rieger M."/>
            <person name="Riles L."/>
            <person name="Rinaldi T."/>
            <person name="Robben J."/>
            <person name="Rodrigues-Pousada C."/>
            <person name="Rodriguez-Belmonte E."/>
            <person name="Rodriguez-Torres A.M."/>
            <person name="Rose M."/>
            <person name="Ruzzi M."/>
            <person name="Saliola M."/>
            <person name="Sanchez-Perez M."/>
            <person name="Schaefer B."/>
            <person name="Schaefer M."/>
            <person name="Scharfe M."/>
            <person name="Schmidheini T."/>
            <person name="Schreer A."/>
            <person name="Skala J."/>
            <person name="Souciet J.-L."/>
            <person name="Steensma H.Y."/>
            <person name="Talla E."/>
            <person name="Thierry A."/>
            <person name="Vandenbol M."/>
            <person name="van der Aart Q.J.M."/>
            <person name="Van Dyck L."/>
            <person name="Vanoni M."/>
            <person name="Verhasselt P."/>
            <person name="Voet M."/>
            <person name="Volckaert G."/>
            <person name="Wambutt R."/>
            <person name="Watson M.D."/>
            <person name="Weber N."/>
            <person name="Wedler E."/>
            <person name="Wedler H."/>
            <person name="Wipfli P."/>
            <person name="Wolf K."/>
            <person name="Wright L.F."/>
            <person name="Zaccaria P."/>
            <person name="Zimmermann M."/>
            <person name="Zollner A."/>
            <person name="Kleine K."/>
        </authorList>
    </citation>
    <scope>NUCLEOTIDE SEQUENCE [LARGE SCALE GENOMIC DNA]</scope>
    <source>
        <strain>ATCC 204508 / S288c</strain>
    </source>
</reference>
<reference key="3">
    <citation type="journal article" date="2014" name="G3 (Bethesda)">
        <title>The reference genome sequence of Saccharomyces cerevisiae: Then and now.</title>
        <authorList>
            <person name="Engel S.R."/>
            <person name="Dietrich F.S."/>
            <person name="Fisk D.G."/>
            <person name="Binkley G."/>
            <person name="Balakrishnan R."/>
            <person name="Costanzo M.C."/>
            <person name="Dwight S.S."/>
            <person name="Hitz B.C."/>
            <person name="Karra K."/>
            <person name="Nash R.S."/>
            <person name="Weng S."/>
            <person name="Wong E.D."/>
            <person name="Lloyd P."/>
            <person name="Skrzypek M.S."/>
            <person name="Miyasato S.R."/>
            <person name="Simison M."/>
            <person name="Cherry J.M."/>
        </authorList>
    </citation>
    <scope>GENOME REANNOTATION</scope>
    <source>
        <strain>ATCC 204508 / S288c</strain>
    </source>
</reference>
<reference key="4">
    <citation type="journal article" date="2007" name="Genome Res.">
        <title>Approaching a complete repository of sequence-verified protein-encoding clones for Saccharomyces cerevisiae.</title>
        <authorList>
            <person name="Hu Y."/>
            <person name="Rolfs A."/>
            <person name="Bhullar B."/>
            <person name="Murthy T.V.S."/>
            <person name="Zhu C."/>
            <person name="Berger M.F."/>
            <person name="Camargo A.A."/>
            <person name="Kelley F."/>
            <person name="McCarron S."/>
            <person name="Jepson D."/>
            <person name="Richardson A."/>
            <person name="Raphael J."/>
            <person name="Moreira D."/>
            <person name="Taycher E."/>
            <person name="Zuo D."/>
            <person name="Mohr S."/>
            <person name="Kane M.F."/>
            <person name="Williamson J."/>
            <person name="Simpson A.J.G."/>
            <person name="Bulyk M.L."/>
            <person name="Harlow E."/>
            <person name="Marsischky G."/>
            <person name="Kolodner R.D."/>
            <person name="LaBaer J."/>
        </authorList>
    </citation>
    <scope>NUCLEOTIDE SEQUENCE [GENOMIC DNA]</scope>
    <source>
        <strain>ATCC 204508 / S288c</strain>
    </source>
</reference>
<reference key="5">
    <citation type="journal article" date="1999" name="Mol. Cell">
        <title>Elongator, a multisubunit component of a novel RNA polymerase II holoenzyme for transcriptional elongation.</title>
        <authorList>
            <person name="Otero G."/>
            <person name="Fellows J."/>
            <person name="Li Y."/>
            <person name="de Bizemont T."/>
            <person name="Dirac A.M."/>
            <person name="Gustafsson C.M."/>
            <person name="Erdjument-Bromage H."/>
            <person name="Tempst P."/>
            <person name="Svejstrup J.Q."/>
        </authorList>
    </citation>
    <scope>SUBCELLULAR LOCATION</scope>
</reference>
<reference key="6">
    <citation type="journal article" date="2001" name="EMBO J.">
        <title>Saccharomyces cerevisiae Elongator mutations confer resistance to the Kluyveromyces lactis zymocin.</title>
        <authorList>
            <person name="Frohloff F."/>
            <person name="Fichtner L."/>
            <person name="Jablonowski D."/>
            <person name="Breunig K.D."/>
            <person name="Schaffrath R."/>
        </authorList>
    </citation>
    <scope>FUNCTION OF THE ELONGATOR COMPLEX IN ZYMOCIN SENSITIVITY</scope>
</reference>
<reference key="7">
    <citation type="journal article" date="2001" name="J. Biol. Chem.">
        <title>RNA polymerase II elongator holoenzyme is composed of two discrete subcomplexes.</title>
        <authorList>
            <person name="Winkler G.S."/>
            <person name="Petrakis T.G."/>
            <person name="Ethelberg S."/>
            <person name="Tokunaga M."/>
            <person name="Erdjument-Bromage H."/>
            <person name="Tempst P."/>
            <person name="Svejstrup J.Q."/>
        </authorList>
    </citation>
    <scope>IDENTIFICATION IN THE ELONGATOR COMPLEX</scope>
</reference>
<reference key="8">
    <citation type="journal article" date="2001" name="Mol. Cell. Biol.">
        <title>Characterization of a six-subunit holo-elongator complex required for the regulated expression of a group of genes in Saccharomyces cerevisiae.</title>
        <authorList>
            <person name="Krogan N.J."/>
            <person name="Greenblatt J.F."/>
        </authorList>
    </citation>
    <scope>IDENTIFICATION IN THE ELONGATOR COMPLEX</scope>
</reference>
<reference key="9">
    <citation type="journal article" date="2002" name="Mol. Microbiol.">
        <title>Protein interactions within Saccharomyces cerevisiae Elongator, a complex essential for Kluyveromyces lactis zymocicity.</title>
        <authorList>
            <person name="Fichtner L."/>
            <person name="Frohloff F."/>
            <person name="Jablonowski D."/>
            <person name="Stark M.J.R."/>
            <person name="Schaffrath R."/>
        </authorList>
    </citation>
    <scope>INTERACTION WITH IKI3</scope>
</reference>
<reference key="10">
    <citation type="journal article" date="2002" name="Proc. Natl. Acad. Sci. U.S.A.">
        <title>Elongator is a histone H3 and H4 acetyltransferase important for normal histone acetylation levels in vivo.</title>
        <authorList>
            <person name="Winkler G.S."/>
            <person name="Kristjuhan A."/>
            <person name="Erdjument-Bromage H."/>
            <person name="Tempst P."/>
            <person name="Svejstrup J.Q."/>
        </authorList>
    </citation>
    <scope>DISPUTED FUNCTION IN HISTONE ACETYLATION</scope>
</reference>
<reference key="11">
    <citation type="journal article" date="2003" name="Mol. Genet. Genomics">
        <title>Structural and functional analysis of the killer element pPin1-3 from Pichia inositovora.</title>
        <authorList>
            <person name="Klassen R."/>
            <person name="Meinhardt F."/>
        </authorList>
    </citation>
    <scope>FUNCTION OF THE ELONGATOR COMPLEX IN PICHIA INOSITOVORA TOXIN SENSITIVITY</scope>
</reference>
<reference key="12">
    <citation type="journal article" date="2003" name="Nature">
        <title>Global analysis of protein localization in budding yeast.</title>
        <authorList>
            <person name="Huh W.-K."/>
            <person name="Falvo J.V."/>
            <person name="Gerke L.C."/>
            <person name="Carroll A.S."/>
            <person name="Howson R.W."/>
            <person name="Weissman J.S."/>
            <person name="O'Shea E.K."/>
        </authorList>
    </citation>
    <scope>SUBCELLULAR LOCATION [LARGE SCALE ANALYSIS]</scope>
</reference>
<reference key="13">
    <citation type="journal article" date="2003" name="Nature">
        <title>Global analysis of protein expression in yeast.</title>
        <authorList>
            <person name="Ghaemmaghami S."/>
            <person name="Huh W.-K."/>
            <person name="Bower K."/>
            <person name="Howson R.W."/>
            <person name="Belle A."/>
            <person name="Dephoure N."/>
            <person name="O'Shea E.K."/>
            <person name="Weissman J.S."/>
        </authorList>
    </citation>
    <scope>LEVEL OF PROTEIN EXPRESSION [LARGE SCALE ANALYSIS]</scope>
</reference>
<reference key="14">
    <citation type="journal article" date="2004" name="J. Biol. Chem.">
        <title>Molecular architecture, structure-function relationship, and importance of the Elp3 subunit for the RNA binding of holo-elongator.</title>
        <authorList>
            <person name="Petrakis T.G."/>
            <person name="Wittschieben B.O."/>
            <person name="Svejstrup J.Q."/>
        </authorList>
    </citation>
    <scope>FUNCTION</scope>
</reference>
<reference key="15">
    <citation type="journal article" date="2005" name="Mol. Cell">
        <title>Elp1p, the yeast homolog of the FD disease syndrome protein, negatively regulates exocytosis independently of transcriptional elongation.</title>
        <authorList>
            <person name="Rahl P.B."/>
            <person name="Chen C.Z."/>
            <person name="Collins R.N."/>
        </authorList>
    </citation>
    <scope>FUNCTION IN EXOCYTOSIS REGULATION</scope>
    <scope>SUBCELLULAR LOCATION</scope>
</reference>
<reference key="16">
    <citation type="journal article" date="2005" name="RNA">
        <title>An early step in wobble uridine tRNA modification requires the Elongator complex.</title>
        <authorList>
            <person name="Huang B."/>
            <person name="Johansson M.J.O."/>
            <person name="Bystroem A.S."/>
        </authorList>
    </citation>
    <scope>FUNCTION IN TRNA MODIFICATION</scope>
</reference>
<reference key="17">
    <citation type="journal article" date="2008" name="Mol. Microbiol.">
        <title>A versatile partner of eukaryotic protein complexes that is involved in multiple biological processes: Kti11/Dph3.</title>
        <authorList>
            <person name="Baer C."/>
            <person name="Zabel R."/>
            <person name="Liu S."/>
            <person name="Stark M.J."/>
            <person name="Schaffrath R."/>
        </authorList>
    </citation>
    <scope>INTERACTION WITH KTI11</scope>
</reference>
<reference key="18">
    <citation type="journal article" date="2008" name="RNA">
        <title>A genome-wide screen identifies genes required for formation of the wobble nucleoside 5-methoxycarbonylmethyl-2-thiouridine in Saccharomyces cerevisiae.</title>
        <authorList>
            <person name="Huang B."/>
            <person name="Lu J."/>
            <person name="Bystroem A.S."/>
        </authorList>
    </citation>
    <scope>FUNCTION</scope>
</reference>
<reference key="19">
    <citation type="journal article" date="2012" name="Nat. Struct. Mol. Biol.">
        <title>The Elongator subcomplex Elp456 is a hexameric RecA-like ATPase.</title>
        <authorList>
            <person name="Glatt S."/>
            <person name="Letoquart J."/>
            <person name="Faux C."/>
            <person name="Taylor N.M."/>
            <person name="Seraphin B."/>
            <person name="Muller C.W."/>
        </authorList>
    </citation>
    <scope>SUBUNIT</scope>
</reference>
<reference key="20">
    <citation type="journal article" date="2015" name="PLoS Genet.">
        <title>Phosphorylation of Elp1 by Hrr25 is required for elongator-dependent tRNA modification in yeast.</title>
        <authorList>
            <person name="Abdel-Fattah W."/>
            <person name="Jablonowski D."/>
            <person name="Di Santo R."/>
            <person name="Thuering K.L."/>
            <person name="Scheidt V."/>
            <person name="Hammermeister A."/>
            <person name="Ten Have S."/>
            <person name="Helm M."/>
            <person name="Schaffrath R."/>
            <person name="Stark M.J."/>
        </authorList>
    </citation>
    <scope>PHOSPHORYLATION AT SER-492</scope>
</reference>
<reference key="21">
    <citation type="journal article" date="2018" name="Cell. Mol. Life Sci.">
        <title>Structural insights into the function of Elongator.</title>
        <authorList>
            <person name="Dalwadi U."/>
            <person name="Yip C.K."/>
        </authorList>
    </citation>
    <scope>REVIEW</scope>
</reference>
<reference evidence="27" key="22">
    <citation type="journal article" date="2015" name="Structure">
        <title>The Elp2 subunit is essential for elongator complex assembly and functional regulation.</title>
        <authorList>
            <person name="Dong C."/>
            <person name="Lin Z."/>
            <person name="Diao W."/>
            <person name="Li D."/>
            <person name="Chu X."/>
            <person name="Wang Z."/>
            <person name="Zhou H."/>
            <person name="Xie Z."/>
            <person name="Shen Y."/>
            <person name="Long J."/>
        </authorList>
    </citation>
    <scope>X-RAY CRYSTALLOGRAPHY (3.20 ANGSTROMS)</scope>
    <scope>FUNCTION</scope>
    <scope>IDENTIFICATION IN THE ELONGATOR ELP123 SUBCOMPLEX</scope>
    <scope>DOMAIN</scope>
    <scope>MUTAGENESIS OF 1-MET--ALA-14; ARG-626; ARG-628; ARG-654 AND ARG-675</scope>
</reference>
<reference key="23">
    <citation type="journal article" date="2016" name="Nat. Chem. Biol.">
        <title>Cbr1 is a Dph3 reductase required for the tRNA wobble uridine modification.</title>
        <authorList>
            <person name="Lin Z."/>
            <person name="Dong M."/>
            <person name="Zhang Y."/>
            <person name="Lee E.A."/>
            <person name="Lin H."/>
        </authorList>
    </citation>
    <scope>INTERACTION WITH KTI11</scope>
    <scope>IDENTIFICATION BY MASS SPECTROMETRY</scope>
</reference>
<reference key="24">
    <citation type="journal article" date="2017" name="EMBO Rep.">
        <title>Architecture of the yeast Elongator complex.</title>
        <authorList>
            <person name="Dauden M.I."/>
            <person name="Kosinski J."/>
            <person name="Kolaj-Robin O."/>
            <person name="Desfosses A."/>
            <person name="Ori A."/>
            <person name="Faux C."/>
            <person name="Hoffmann N.A."/>
            <person name="Onuma O.F."/>
            <person name="Breunig K.D."/>
            <person name="Beck M."/>
            <person name="Sachse C."/>
            <person name="Seraphin B."/>
            <person name="Glatt S."/>
            <person name="Mueller C.W."/>
        </authorList>
    </citation>
    <scope>STRUCTURE BY ELECTRON MICROSCOPY (3.3 ANGSTROMS)</scope>
    <scope>IDENTIFICATION IN THE ELONGATOR COMPLEX</scope>
</reference>
<reference key="25">
    <citation type="journal article" date="2017" name="EMBO Rep.">
        <title>Molecular architecture of the yeast Elongator complex reveals an unexpected asymmetric subunit arrangement.</title>
        <authorList>
            <person name="Setiaputra D.T."/>
            <person name="Cheng D.T."/>
            <person name="Lu S."/>
            <person name="Hansen J.M."/>
            <person name="Dalwadi U."/>
            <person name="Lam C.H."/>
            <person name="To J.L."/>
            <person name="Dong M.Q."/>
            <person name="Yip C.K."/>
        </authorList>
    </citation>
    <scope>X-RAY CRYSTALLOGRAPHY (2.81 ANGSTROMS)</scope>
    <scope>STRUCTURE BY ELECTRON MICROSCOPY</scope>
    <scope>IDENTIFICATION IN THE ELONGATOR COMPLEX</scope>
</reference>
<reference evidence="28" key="26">
    <citation type="journal article" date="2019" name="Sci. Adv.">
        <title>Molecular basis of tRNA recognition by the Elongator complex.</title>
        <authorList>
            <person name="Dauden M.I."/>
            <person name="Jaciuk M."/>
            <person name="Weis F."/>
            <person name="Lin T.Y."/>
            <person name="Kleindienst C."/>
            <person name="Abbassi N.E.H."/>
            <person name="Khatter H."/>
            <person name="Krutyholowa R."/>
            <person name="Breunig K.D."/>
            <person name="Kosinski J."/>
            <person name="Mueller C.W."/>
            <person name="Glatt S."/>
        </authorList>
    </citation>
    <scope>STRUCTURE BY ELECTRON MICROSCOPY (3.30 ANGSTROMS) OF THE ELONGATOR ELP123 SUBCOMPLEX</scope>
    <scope>FUNCTION</scope>
</reference>